<evidence type="ECO:0000250" key="1">
    <source>
        <dbReference type="UniProtKB" id="P09790"/>
    </source>
</evidence>
<evidence type="ECO:0000250" key="2">
    <source>
        <dbReference type="UniProtKB" id="Q9JXM7"/>
    </source>
</evidence>
<evidence type="ECO:0000255" key="3">
    <source>
        <dbReference type="PROSITE-ProRule" id="PRU00303"/>
    </source>
</evidence>
<evidence type="ECO:0000255" key="4">
    <source>
        <dbReference type="PROSITE-ProRule" id="PRU00556"/>
    </source>
</evidence>
<evidence type="ECO:0000255" key="5">
    <source>
        <dbReference type="PROSITE-ProRule" id="PRU01240"/>
    </source>
</evidence>
<evidence type="ECO:0000269" key="6">
    <source>
    </source>
</evidence>
<evidence type="ECO:0000269" key="7">
    <source>
    </source>
</evidence>
<evidence type="ECO:0000269" key="8">
    <source>
    </source>
</evidence>
<evidence type="ECO:0000269" key="9">
    <source>
    </source>
</evidence>
<evidence type="ECO:0000269" key="10">
    <source>
    </source>
</evidence>
<evidence type="ECO:0000269" key="11">
    <source>
    </source>
</evidence>
<evidence type="ECO:0000303" key="12">
    <source>
    </source>
</evidence>
<evidence type="ECO:0000303" key="13">
    <source>
    </source>
</evidence>
<evidence type="ECO:0000305" key="14"/>
<evidence type="ECO:0000305" key="15">
    <source>
    </source>
</evidence>
<evidence type="ECO:0000305" key="16">
    <source>
    </source>
</evidence>
<evidence type="ECO:0000305" key="17">
    <source>
    </source>
</evidence>
<evidence type="ECO:0000305" key="18">
    <source>
    </source>
</evidence>
<evidence type="ECO:0000312" key="19">
    <source>
        <dbReference type="EMBL" id="AAN71715.1"/>
    </source>
</evidence>
<evidence type="ECO:0000312" key="20">
    <source>
        <dbReference type="EMBL" id="EFV64546.1"/>
    </source>
</evidence>
<evidence type="ECO:0007744" key="21">
    <source>
        <dbReference type="PDB" id="1UYN"/>
    </source>
</evidence>
<evidence type="ECO:0007744" key="22">
    <source>
        <dbReference type="PDB" id="1UYO"/>
    </source>
</evidence>
<evidence type="ECO:0007829" key="23">
    <source>
        <dbReference type="PDB" id="1UYN"/>
    </source>
</evidence>
<proteinExistence type="evidence at protein level"/>
<keyword id="KW-0002">3D-structure</keyword>
<keyword id="KW-0068">Autocatalytic cleavage</keyword>
<keyword id="KW-0998">Cell outer membrane</keyword>
<keyword id="KW-0378">Hydrolase</keyword>
<keyword id="KW-0449">Lipoprotein</keyword>
<keyword id="KW-0472">Membrane</keyword>
<keyword id="KW-0564">Palmitate</keyword>
<keyword id="KW-0645">Protease</keyword>
<keyword id="KW-0964">Secreted</keyword>
<keyword id="KW-0720">Serine protease</keyword>
<keyword id="KW-0732">Signal</keyword>
<keyword id="KW-0812">Transmembrane</keyword>
<keyword id="KW-1134">Transmembrane beta strand</keyword>
<keyword id="KW-0843">Virulence</keyword>
<dbReference type="EC" id="3.4.21.-" evidence="15"/>
<dbReference type="EMBL" id="AY150284">
    <property type="protein sequence ID" value="AAN71715.1"/>
    <property type="molecule type" value="Genomic_DNA"/>
</dbReference>
<dbReference type="EMBL" id="AEQZ01000011">
    <property type="protein sequence ID" value="EFV64546.1"/>
    <property type="molecule type" value="Genomic_DNA"/>
</dbReference>
<dbReference type="RefSeq" id="WP_009345503.1">
    <property type="nucleotide sequence ID" value="NZ_AEQZ01000011.1"/>
</dbReference>
<dbReference type="PDB" id="1UYN">
    <property type="method" value="X-ray"/>
    <property type="resolution" value="2.60 A"/>
    <property type="chains" value="X=776-1083"/>
</dbReference>
<dbReference type="PDB" id="1UYO">
    <property type="method" value="X-ray"/>
    <property type="resolution" value="3.20 A"/>
    <property type="chains" value="X=776-1083"/>
</dbReference>
<dbReference type="PDBsum" id="1UYN"/>
<dbReference type="PDBsum" id="1UYO"/>
<dbReference type="SMR" id="E6MVD9"/>
<dbReference type="MEROPS" id="S08.160"/>
<dbReference type="TCDB" id="1.B.12.9.1">
    <property type="family name" value="the autotransporter-1 (at-1) family"/>
</dbReference>
<dbReference type="PATRIC" id="fig|909420.4.peg.602"/>
<dbReference type="EvolutionaryTrace" id="E6MVD9"/>
<dbReference type="PHI-base" id="PHI:8297"/>
<dbReference type="Proteomes" id="UP000032707">
    <property type="component" value="Unassembled WGS sequence"/>
</dbReference>
<dbReference type="GO" id="GO:0009279">
    <property type="term" value="C:cell outer membrane"/>
    <property type="evidence" value="ECO:0007669"/>
    <property type="project" value="UniProtKB-SubCell"/>
</dbReference>
<dbReference type="GO" id="GO:0009986">
    <property type="term" value="C:cell surface"/>
    <property type="evidence" value="ECO:0007669"/>
    <property type="project" value="UniProtKB-SubCell"/>
</dbReference>
<dbReference type="GO" id="GO:0005576">
    <property type="term" value="C:extracellular region"/>
    <property type="evidence" value="ECO:0007669"/>
    <property type="project" value="UniProtKB-SubCell"/>
</dbReference>
<dbReference type="GO" id="GO:0005886">
    <property type="term" value="C:plasma membrane"/>
    <property type="evidence" value="ECO:0007669"/>
    <property type="project" value="TreeGrafter"/>
</dbReference>
<dbReference type="GO" id="GO:0004252">
    <property type="term" value="F:serine-type endopeptidase activity"/>
    <property type="evidence" value="ECO:0007669"/>
    <property type="project" value="InterPro"/>
</dbReference>
<dbReference type="GO" id="GO:0016485">
    <property type="term" value="P:protein processing"/>
    <property type="evidence" value="ECO:0007669"/>
    <property type="project" value="TreeGrafter"/>
</dbReference>
<dbReference type="CDD" id="cd04848">
    <property type="entry name" value="Peptidases_S8_Autotransporter_serine_protease_like"/>
    <property type="match status" value="1"/>
</dbReference>
<dbReference type="Gene3D" id="2.40.128.130">
    <property type="entry name" value="Autotransporter beta-domain"/>
    <property type="match status" value="1"/>
</dbReference>
<dbReference type="Gene3D" id="3.40.50.200">
    <property type="entry name" value="Peptidase S8/S53 domain"/>
    <property type="match status" value="1"/>
</dbReference>
<dbReference type="InterPro" id="IPR005546">
    <property type="entry name" value="Autotransporte_beta"/>
</dbReference>
<dbReference type="InterPro" id="IPR036709">
    <property type="entry name" value="Autotransporte_beta_dom_sf"/>
</dbReference>
<dbReference type="InterPro" id="IPR013425">
    <property type="entry name" value="Autotrns_rpt"/>
</dbReference>
<dbReference type="InterPro" id="IPR000209">
    <property type="entry name" value="Peptidase_S8/S53_dom"/>
</dbReference>
<dbReference type="InterPro" id="IPR036852">
    <property type="entry name" value="Peptidase_S8/S53_dom_sf"/>
</dbReference>
<dbReference type="InterPro" id="IPR023828">
    <property type="entry name" value="Peptidase_S8_Ser-AS"/>
</dbReference>
<dbReference type="InterPro" id="IPR015500">
    <property type="entry name" value="Peptidase_S8_subtilisin-rel"/>
</dbReference>
<dbReference type="InterPro" id="IPR034061">
    <property type="entry name" value="Peptidases_S8_Autotransporter"/>
</dbReference>
<dbReference type="NCBIfam" id="TIGR02601">
    <property type="entry name" value="autotrns_rpt"/>
    <property type="match status" value="1"/>
</dbReference>
<dbReference type="PANTHER" id="PTHR42884:SF14">
    <property type="entry name" value="NEUROENDOCRINE CONVERTASE 1"/>
    <property type="match status" value="1"/>
</dbReference>
<dbReference type="PANTHER" id="PTHR42884">
    <property type="entry name" value="PROPROTEIN CONVERTASE SUBTILISIN/KEXIN-RELATED"/>
    <property type="match status" value="1"/>
</dbReference>
<dbReference type="Pfam" id="PF03797">
    <property type="entry name" value="Autotransporter"/>
    <property type="match status" value="1"/>
</dbReference>
<dbReference type="Pfam" id="PF12951">
    <property type="entry name" value="PATR"/>
    <property type="match status" value="1"/>
</dbReference>
<dbReference type="Pfam" id="PF00082">
    <property type="entry name" value="Peptidase_S8"/>
    <property type="match status" value="1"/>
</dbReference>
<dbReference type="PRINTS" id="PR00723">
    <property type="entry name" value="SUBTILISIN"/>
</dbReference>
<dbReference type="SMART" id="SM00869">
    <property type="entry name" value="Autotransporter"/>
    <property type="match status" value="1"/>
</dbReference>
<dbReference type="SUPFAM" id="SSF103515">
    <property type="entry name" value="Autotransporter"/>
    <property type="match status" value="1"/>
</dbReference>
<dbReference type="SUPFAM" id="SSF52743">
    <property type="entry name" value="Subtilisin-like"/>
    <property type="match status" value="1"/>
</dbReference>
<dbReference type="PROSITE" id="PS51208">
    <property type="entry name" value="AUTOTRANSPORTER"/>
    <property type="match status" value="1"/>
</dbReference>
<dbReference type="PROSITE" id="PS51257">
    <property type="entry name" value="PROKAR_LIPOPROTEIN"/>
    <property type="match status" value="1"/>
</dbReference>
<dbReference type="PROSITE" id="PS51892">
    <property type="entry name" value="SUBTILASE"/>
    <property type="match status" value="1"/>
</dbReference>
<dbReference type="PROSITE" id="PS00138">
    <property type="entry name" value="SUBTILASE_SER"/>
    <property type="match status" value="1"/>
</dbReference>
<protein>
    <recommendedName>
        <fullName evidence="12">Neisserial autotransporter lipoprotein NalP</fullName>
        <shortName evidence="12">Autotransporter NalP</shortName>
        <shortName evidence="12">NalP</shortName>
        <ecNumber evidence="15">3.4.21.-</ecNumber>
    </recommendedName>
    <component>
        <recommendedName>
            <fullName evidence="12">NalP passenger domain</fullName>
        </recommendedName>
    </component>
    <component>
        <recommendedName>
            <fullName evidence="13">NalP translocator</fullName>
        </recommendedName>
    </component>
</protein>
<reference evidence="19" key="1">
    <citation type="journal article" date="2001" name="FEMS Immunol. Med. Microbiol.">
        <title>In vivo expression of Neisseria meningitidis proteins homologous to the Haemophilus influenzae Hap and Hia autotransporters.</title>
        <authorList>
            <person name="van Ulsen P."/>
            <person name="van Alphen L."/>
            <person name="Hopman C.T."/>
            <person name="van der Ende A."/>
            <person name="Tommassen J."/>
        </authorList>
    </citation>
    <scope>NUCLEOTIDE SEQUENCE [GENOMIC DNA]</scope>
    <source>
        <strain>H44/76</strain>
    </source>
</reference>
<reference evidence="20" key="2">
    <citation type="journal article" date="2011" name="J. Bacteriol.">
        <title>Genome sequence of Neisseria meningitidis serogroup B strain H44/76.</title>
        <authorList>
            <person name="Piet J.R."/>
            <person name="Huis In 't Veld R.A."/>
            <person name="van Schaik B.D."/>
            <person name="van Kampen A.H."/>
            <person name="Baas F."/>
            <person name="van de Beek D."/>
            <person name="Pannekoek Y."/>
            <person name="van der Ende A."/>
        </authorList>
    </citation>
    <scope>NUCLEOTIDE SEQUENCE [LARGE SCALE GENOMIC DNA]</scope>
    <source>
        <strain>H44/76</strain>
    </source>
</reference>
<reference key="3">
    <citation type="journal article" date="2003" name="Mol. Microbiol.">
        <title>A Neisserial autotransporter NalP modulating the processing of other autotransporters.</title>
        <authorList>
            <person name="van Ulsen P."/>
            <person name="van Alphen L."/>
            <person name="ten Hove J."/>
            <person name="Fransen F."/>
            <person name="van der Ley P."/>
            <person name="Tommassen J."/>
        </authorList>
    </citation>
    <scope>FUNCTION</scope>
    <scope>SUBCELLULAR LOCATION</scope>
    <scope>PROBABLE PALMITOYLATION AT CYS-28</scope>
    <scope>POSSIBLE PROCESSING SITE</scope>
    <scope>DISRUPTION PHENOTYPE</scope>
    <scope>MUTAGENESIS OF SER-427</scope>
    <scope>PROBABLE PHASE VARIABILITY</scope>
    <source>
        <strain>H44/76</strain>
    </source>
</reference>
<reference key="4">
    <citation type="journal article" date="2006" name="J. Bacteriol.">
        <title>Polar localization of the autotransporter family of large bacterial virulence proteins.</title>
        <authorList>
            <person name="Jain S."/>
            <person name="van Ulsen P."/>
            <person name="Benz I."/>
            <person name="Schmidt M.A."/>
            <person name="Fernandez R."/>
            <person name="Tommassen J."/>
            <person name="Goldberg M.B."/>
        </authorList>
    </citation>
    <scope>SUBCELLULAR LOCATION</scope>
    <scope>MUTAGENESIS OF SER-427</scope>
    <source>
        <strain>H44/76</strain>
    </source>
</reference>
<reference key="5">
    <citation type="journal article" date="2010" name="Infect. Immun.">
        <title>NalP-mediated proteolytic release of lactoferrin-binding protein B from the meningococcal cell surface.</title>
        <authorList>
            <person name="Roussel-Jazede V."/>
            <person name="Jongerius I."/>
            <person name="Bos M.P."/>
            <person name="Tommassen J."/>
            <person name="van Ulsen P."/>
        </authorList>
    </citation>
    <scope>FUNCTION</scope>
    <scope>INDUCTION</scope>
    <scope>DISRUPTION PHENOTYPE</scope>
    <scope>MUTAGENESIS OF SER-427</scope>
    <source>
        <strain>H44/76</strain>
    </source>
</reference>
<reference key="6">
    <citation type="journal article" date="2013" name="Mol. Microbiol.">
        <title>Involvement of three meningococcal surface-exposed proteins, the heparin-binding protein NhbA, the alpha-peptide of IgA protease and the autotransporter protease NalP, in initiation of biofilm formation.</title>
        <authorList>
            <person name="Arenas J."/>
            <person name="Nijland R."/>
            <person name="Rodriguez F.J."/>
            <person name="Bosma T.N."/>
            <person name="Tommassen J."/>
        </authorList>
    </citation>
    <scope>FUNCTION IN BIOFILM FORMATION REGULATION</scope>
    <scope>DISRUPTION PHENOTYPE</scope>
    <scope>MUTAGENESIS OF SER-427</scope>
    <source>
        <strain>H44/76</strain>
    </source>
</reference>
<reference key="7">
    <citation type="journal article" date="2013" name="Microbiology">
        <title>Lipidation of the autotransporter NalP of Neisseria meningitidis is required for its function in the release of cell-surface-exposed proteins.</title>
        <authorList>
            <person name="Roussel-Jazede V."/>
            <person name="Grijpstra J."/>
            <person name="van Dam V."/>
            <person name="Tommassen J."/>
            <person name="van Ulsen P."/>
        </authorList>
    </citation>
    <scope>FUNCTION OF LIPIDATION</scope>
    <scope>SUBCELLULAR LOCATION</scope>
    <scope>MUTAGENESIS OF 1-MET--CYS-28 AND CYS-28</scope>
    <source>
        <strain>H44/76</strain>
    </source>
</reference>
<reference evidence="21 22" key="8">
    <citation type="journal article" date="2004" name="EMBO J.">
        <title>Structure of the translocator domain of a bacterial autotransporter.</title>
        <authorList>
            <person name="Oomen C.J."/>
            <person name="van Ulsen P."/>
            <person name="van Gelder P."/>
            <person name="Feijen M."/>
            <person name="Tommassen J."/>
            <person name="Gros P."/>
        </authorList>
    </citation>
    <scope>X-RAY CRYSTALLOGRAPHY (2.60 ANGSTROMS) OF 776-1083</scope>
    <scope>FUNCTION</scope>
    <scope>SUBCELLULAR LOCATION</scope>
    <scope>DOMAIN</scope>
    <source>
        <strain>H44/76</strain>
    </source>
</reference>
<accession>E6MVD9</accession>
<accession>Q8GKS5</accession>
<organism>
    <name type="scientific">Neisseria meningitidis serogroup B / serotype 15 (strain H44/76)</name>
    <dbReference type="NCBI Taxonomy" id="909420"/>
    <lineage>
        <taxon>Bacteria</taxon>
        <taxon>Pseudomonadati</taxon>
        <taxon>Pseudomonadota</taxon>
        <taxon>Betaproteobacteria</taxon>
        <taxon>Neisseriales</taxon>
        <taxon>Neisseriaceae</taxon>
        <taxon>Neisseria</taxon>
    </lineage>
</organism>
<gene>
    <name evidence="12" type="primary">nalP</name>
    <name evidence="20" type="ORF">NMH_0145</name>
</gene>
<comment type="function">
    <text evidence="2 6 7 9 11">Major human immunogenic protein. Autotransporter with a secreted protease domain involved in processing other autotransporter proteins including App and IgA. Probably autoprocesses to release the about 70 kDa passenger domain (PubMed:14617158). Processes the lactoferrin receptor lipoprotein subunit (LbpB) extracellularly, releasing it from the cell surface. LbpB release protects bacteria against complement-mediated killing by anti-LbpB antibodies (PubMed:20421383). Processes NHBA (PubMed:23258267). Lipidation slows its auto-processing, probably allowing it to act on endogenous substrates on the cell surface before the passenger domain is released into the medium (PubMed:23258267). The C-terminal beta-barrel domain inserts into the outer membrane where it probably exports the N-terminal passenger domain (PubMed:15014442). Both the cell surface protein (Neisserial autotransporter lipoprotein NalP) and the passenger domain cleave human (host) complement factor C3, generating a shorter alpha chain and a longer beta chain than normal (By similarity).</text>
</comment>
<comment type="function">
    <text evidence="10 17">Plays a role in extracellular-DNA (eDNA) mediated biofilm formation. In some strains (including cc32 strain H44/76 but not cc11 strain B16B6) eDNA stimulates biofilm formation. When NalP is not expressed (and no longer processes NHBA or IgA) biofilm formation increases (PubMed:23163582). This is probably because the number of positively charged, DNA-binding peptides on the cell surface rises, resulting in increased biofilm formation (Probable).</text>
</comment>
<comment type="function">
    <molecule>NalP passenger domain</molecule>
    <text evidence="2">Cleaves human (host) complement factor C3, generating a shorter alpha chain and a longer beta chain than normal. Does not act on mouse or rabbit C3. Cleavage causes C3b degradation by human CFI and CFH, decreases deposition of C3b on the bacteria surface and probably facilitates complement escape.</text>
</comment>
<comment type="subcellular location">
    <molecule>Neisserial autotransporter lipoprotein NalP</molecule>
    <subcellularLocation>
        <location evidence="3 16 18">Cell outer membrane</location>
        <topology evidence="3 15 18">Lipid-anchor</topology>
    </subcellularLocation>
    <subcellularLocation>
        <location evidence="8">Cell surface</location>
    </subcellularLocation>
    <text evidence="8">Newly synthesized protein appears in distinct foci on the cell surface; there are 1 or more foci scattered across the cell surface.</text>
</comment>
<comment type="subcellular location">
    <molecule>NalP passenger domain</molecule>
    <subcellularLocation>
        <location evidence="6 11">Secreted</location>
    </subcellularLocation>
    <text evidence="6">An approximately 70 kDa, unlipidated form is secreted. Upon expression of the protein in E.coli this form starts on Gly-65.</text>
</comment>
<comment type="subcellular location">
    <molecule>NalP translocator</molecule>
    <subcellularLocation>
        <location evidence="14">Cell outer membrane</location>
    </subcellularLocation>
    <text evidence="7">An approximately 30 kDa form is detected in membranes; this is probably the beta-barrel translocation domain.</text>
</comment>
<comment type="induction">
    <text evidence="9">The translocator domain alone accumulates during growth under iron-limiting conditions, cell-associated full-length protein accumulates later (at protein level).</text>
</comment>
<comment type="domain">
    <text evidence="1 16 18">The signal peptide, cleaved at the inner membrane, guides the autotransporter protein to the periplasmic space. Insertion of the C-terminal translocator domain in the outer membrane forms a hydrophilic pore for the translocation of the passenger domain to the bacterial cell surface, with subsequent lipid-anchoring to the cell outer membrane and eventual release of the passenger domain.</text>
</comment>
<comment type="domain">
    <text evidence="7">The translocator domain (residues 777-1084) forms a 12-stranded beta-barrel with a 10 X 12.5 Angstrom channel with its N-terminal alpha helix (residues 786-817) inside the channel. The N-terminus of the N-terminal alpha helix points to the extracellular side. The isolated beta-barrel forms a pore able to import and export antibiotics; removal of the N-terminal alpha helix enhances transport.</text>
</comment>
<comment type="PTM">
    <text evidence="6 11">A fusion protein of the first 44 residues with beta-lactamase is lipidated in E.coli, strongly suggesting this is a lipoprotein in situ (PubMed:14617158). The lipidated form is briefly retained on the cell surface which allows it to process its endogenous substrates on the cell surface before the passenger domain is released into the medium (PubMed:23258267).</text>
</comment>
<comment type="disruption phenotype">
    <text evidence="6 9 10">Altered processing of autotransporter proteins IgA protease and App (PubMed:14617158). No longer processes extracellular LbpB (PubMed:20421383). Increased biofilm formation (PubMed:23163582).</text>
</comment>
<comment type="miscellaneous">
    <text evidence="15">Probably a phase variable gene because of slipped-strand mispairing of a polycytidine tract in the coding sequence.</text>
</comment>
<comment type="similarity">
    <text evidence="5">Belongs to the peptidase S8 family.</text>
</comment>
<sequence>MRTTPTFPTKTFKPTAMALAVATTLSACLGGGGGGTSAPDFNAGGTGIGSNSRATTAKSAAVSYAGIKNEMCKDRSMLCAGRDDVAVTDRDAKINRPPPPNLHTGDFPNPNDAYKNLINLKPAIEAGYTGRGVEVGIVDTGESVGSISFPELYGRKEHGYNENYKNYTAYMRKEAPEDGGGKDIEASFDDEAVIETEAKPTDIRHVKEIGHIDLVSHIIGGRSVDGRPAGGIAPDATLHIMNTNDGTKNEMMVAAIRNAWVKLGERGVRIVNNSFGTTSRAGTADLFQIANSEEQYRQALLDYSGGDKTDEGIRLMQQSDYGNLSYHIRNKNMLFIFSTGNDAQAQPNTYALLPFYEKDAQKGIITVAGVDRSGEKFKREMYGEPGTEPLEYGSNHCGITAMWCLSAPYEASVRFTRTNPIQIAGTSFSAPIVTGTAALLLQKYPWMSNDNLRTTLLTTAQDIGAVGVDSKFGWGLLDAGKAMNGPASFPFGDFTADTKGTSDIAYSFRNDISGTGGLIKKGGSQLQLHGNNTYTGKTIIEGGSLVLYGNNKSDMRVETKGALIYNGAASGGSLNSDGIVYLADTDQSGANETVHIKGSLQLDGKGTLYTRLGKLLKVDGTAIIGGKLYMSARGKGAGYLNSTGRRVPFLSAAKIGQDYSFFTNIETDGGLLASLDSVEKTAGSEGDTLSYYVRRGNAARTASAAAHSAPAGLKHAVEQGGSNLENLMVELDASESSATPETVETAAADRTDMPGIRPYGATFRAAAAVQHANAADGVRIFNSLAATVYADSTAAHADMQGRRLKAVSDGLDHNGTGLRVIAQTQQDGGTWEQGGVEGKMRGSTQTVGIAAKTGENTTAAATLGMGRSTWSENSANAKTDSISLFAGIRHDAGDIGYLKGLFSYGRYKNSISRSTGADEHAEGSVNGTLMQLGALGGVNVPFAATGDLTVEGGLRYDLLKQDAFAEKGSALGWSGNSLTEGTLVGLAGLKLSQPLSDKAVLFATAGVERDLNGRDYTVTGGFTGATAATGKTGARNMPHTRLVAGLGADVEFGNGWNGLARYSYAGSKQYGNHSGRVGVGYRF</sequence>
<feature type="signal peptide" evidence="3">
    <location>
        <begin position="1"/>
        <end position="27"/>
    </location>
</feature>
<feature type="chain" id="PRO_5003206948" description="Neisserial autotransporter lipoprotein NalP" evidence="3">
    <location>
        <begin position="28"/>
        <end position="1083"/>
    </location>
</feature>
<feature type="chain" id="PRO_0000456898" description="NalP passenger domain" evidence="15 16 18">
    <location>
        <begin position="65"/>
        <end position="816"/>
    </location>
</feature>
<feature type="chain" id="PRO_0000456899" description="NalP translocator" evidence="16 18">
    <location>
        <begin position="817"/>
        <end position="1083"/>
    </location>
</feature>
<feature type="transmembrane region" description="Beta stranded" evidence="16 21">
    <location>
        <begin position="819"/>
        <end position="828"/>
    </location>
</feature>
<feature type="transmembrane region" description="Beta stranded" evidence="16 21">
    <location>
        <begin position="844"/>
        <end position="852"/>
    </location>
</feature>
<feature type="transmembrane region" description="Beta stranded" evidence="16 21">
    <location>
        <begin position="858"/>
        <end position="866"/>
    </location>
</feature>
<feature type="transmembrane region" description="Beta stranded" evidence="16 21">
    <location>
        <begin position="883"/>
        <end position="891"/>
    </location>
</feature>
<feature type="transmembrane region" description="Beta stranded" evidence="16 21">
    <location>
        <begin position="897"/>
        <end position="906"/>
    </location>
</feature>
<feature type="transmembrane region" description="Beta stranded" evidence="16 21">
    <location>
        <begin position="931"/>
        <end position="941"/>
    </location>
</feature>
<feature type="transmembrane region" description="Beta stranded" evidence="16 21">
    <location>
        <begin position="948"/>
        <end position="958"/>
    </location>
</feature>
<feature type="transmembrane region" description="Beta stranded" evidence="16 21">
    <location>
        <begin position="984"/>
        <end position="994"/>
    </location>
</feature>
<feature type="transmembrane region" description="Beta stranded" evidence="16 21">
    <location>
        <begin position="1000"/>
        <end position="1010"/>
    </location>
</feature>
<feature type="transmembrane region" description="Beta stranded" evidence="16 21">
    <location>
        <begin position="1041"/>
        <end position="1052"/>
    </location>
</feature>
<feature type="transmembrane region" description="Beta stranded" evidence="16 21">
    <location>
        <begin position="1057"/>
        <end position="1066"/>
    </location>
</feature>
<feature type="transmembrane region" description="Beta stranded" evidence="16 21">
    <location>
        <begin position="1074"/>
        <end position="1083"/>
    </location>
</feature>
<feature type="domain" description="Peptidase S8" evidence="5">
    <location>
        <begin position="111"/>
        <end position="483"/>
    </location>
</feature>
<feature type="domain" description="Autotransporter" evidence="4">
    <location>
        <begin position="809"/>
        <end position="1083"/>
    </location>
</feature>
<feature type="active site" description="Charge relay system" evidence="5">
    <location>
        <position position="139"/>
    </location>
</feature>
<feature type="active site" description="Charge relay system" evidence="5">
    <location>
        <position position="211"/>
    </location>
</feature>
<feature type="active site" description="Charge relay system" evidence="5 6 8 9">
    <location>
        <position position="427"/>
    </location>
</feature>
<feature type="lipid moiety-binding region" description="N-palmitoyl cysteine" evidence="3 15">
    <location>
        <position position="28"/>
    </location>
</feature>
<feature type="lipid moiety-binding region" description="S-diacylglycerol cysteine" evidence="3">
    <location>
        <position position="28"/>
    </location>
</feature>
<feature type="mutagenesis site" description="Replaces signal with lipoprotein LbpB signal, protein is still secreted, processing occurs, both processed chains accumulate. Processes LpbP and IgA normally." evidence="11">
    <original>MRTTPTFPTKTFKPTAMALAVATTLSAC</original>
    <variation>MCKPNYGGIVILLPLLLASCGI</variation>
    <location>
        <begin position="1"/>
        <end position="28"/>
    </location>
</feature>
<feature type="mutagenesis site" description="No longer a lipoprotein. Protein is still secreted, processing occurs, larger amounts of both processed chains accumulate more quickly than in wild-type. Poor cleavage of IgA, LbpB and NHBA at the cell surface." evidence="11">
    <original>C</original>
    <variation>A</variation>
    <location>
        <position position="28"/>
    </location>
</feature>
<feature type="mutagenesis site" description="Altered processing of secreted proteins App, IgA and LbpB in vivo, intact NalP accumulates on cell surface, a new processed form of NalP appears. Increased biofilm formation. Not secreted by E.coli, lipidated precursor accumulates in E.coli." evidence="6 8 9">
    <original>S</original>
    <variation>A</variation>
    <location>
        <position position="427"/>
    </location>
</feature>
<feature type="sequence conflict" description="In Ref. 1; AAN71715." evidence="14" ref="1">
    <original>R</original>
    <variation>A</variation>
    <location>
        <position position="96"/>
    </location>
</feature>
<feature type="helix" evidence="23">
    <location>
        <begin position="787"/>
        <end position="809"/>
    </location>
</feature>
<feature type="turn" evidence="23">
    <location>
        <begin position="810"/>
        <end position="812"/>
    </location>
</feature>
<feature type="strand" evidence="23">
    <location>
        <begin position="816"/>
        <end position="832"/>
    </location>
</feature>
<feature type="strand" evidence="23">
    <location>
        <begin position="837"/>
        <end position="854"/>
    </location>
</feature>
<feature type="strand" evidence="23">
    <location>
        <begin position="857"/>
        <end position="872"/>
    </location>
</feature>
<feature type="strand" evidence="23">
    <location>
        <begin position="875"/>
        <end position="892"/>
    </location>
</feature>
<feature type="turn" evidence="23">
    <location>
        <begin position="893"/>
        <end position="895"/>
    </location>
</feature>
<feature type="strand" evidence="23">
    <location>
        <begin position="896"/>
        <end position="914"/>
    </location>
</feature>
<feature type="strand" evidence="23">
    <location>
        <begin position="916"/>
        <end position="918"/>
    </location>
</feature>
<feature type="strand" evidence="23">
    <location>
        <begin position="920"/>
        <end position="938"/>
    </location>
</feature>
<feature type="strand" evidence="23">
    <location>
        <begin position="947"/>
        <end position="961"/>
    </location>
</feature>
<feature type="strand" evidence="23">
    <location>
        <begin position="964"/>
        <end position="968"/>
    </location>
</feature>
<feature type="strand" evidence="23">
    <location>
        <begin position="978"/>
        <end position="994"/>
    </location>
</feature>
<feature type="strand" evidence="23">
    <location>
        <begin position="996"/>
        <end position="1012"/>
    </location>
</feature>
<feature type="strand" evidence="23">
    <location>
        <begin position="1040"/>
        <end position="1053"/>
    </location>
</feature>
<feature type="strand" evidence="23">
    <location>
        <begin position="1056"/>
        <end position="1067"/>
    </location>
</feature>
<feature type="strand" evidence="23">
    <location>
        <begin position="1070"/>
        <end position="1083"/>
    </location>
</feature>
<name>NALP_NEIMH</name>